<feature type="chain" id="PRO_0000128443" description="Small ribosomal subunit protein uS17">
    <location>
        <begin position="1"/>
        <end position="78"/>
    </location>
</feature>
<accession>Q8UE27</accession>
<organism>
    <name type="scientific">Agrobacterium fabrum (strain C58 / ATCC 33970)</name>
    <name type="common">Agrobacterium tumefaciens (strain C58)</name>
    <dbReference type="NCBI Taxonomy" id="176299"/>
    <lineage>
        <taxon>Bacteria</taxon>
        <taxon>Pseudomonadati</taxon>
        <taxon>Pseudomonadota</taxon>
        <taxon>Alphaproteobacteria</taxon>
        <taxon>Hyphomicrobiales</taxon>
        <taxon>Rhizobiaceae</taxon>
        <taxon>Rhizobium/Agrobacterium group</taxon>
        <taxon>Agrobacterium</taxon>
        <taxon>Agrobacterium tumefaciens complex</taxon>
    </lineage>
</organism>
<comment type="function">
    <text evidence="1">One of the primary rRNA binding proteins, it binds specifically to the 5'-end of 16S ribosomal RNA.</text>
</comment>
<comment type="subunit">
    <text evidence="1">Part of the 30S ribosomal subunit.</text>
</comment>
<comment type="similarity">
    <text evidence="1">Belongs to the universal ribosomal protein uS17 family.</text>
</comment>
<proteinExistence type="inferred from homology"/>
<gene>
    <name evidence="1" type="primary">rpsQ</name>
    <name type="ordered locus">Atu1937</name>
    <name type="ORF">AGR_C_3542</name>
</gene>
<evidence type="ECO:0000255" key="1">
    <source>
        <dbReference type="HAMAP-Rule" id="MF_01345"/>
    </source>
</evidence>
<evidence type="ECO:0000305" key="2"/>
<name>RS17_AGRFC</name>
<protein>
    <recommendedName>
        <fullName evidence="1">Small ribosomal subunit protein uS17</fullName>
    </recommendedName>
    <alternativeName>
        <fullName evidence="2">30S ribosomal protein S17</fullName>
    </alternativeName>
</protein>
<reference key="1">
    <citation type="journal article" date="2001" name="Science">
        <title>The genome of the natural genetic engineer Agrobacterium tumefaciens C58.</title>
        <authorList>
            <person name="Wood D.W."/>
            <person name="Setubal J.C."/>
            <person name="Kaul R."/>
            <person name="Monks D.E."/>
            <person name="Kitajima J.P."/>
            <person name="Okura V.K."/>
            <person name="Zhou Y."/>
            <person name="Chen L."/>
            <person name="Wood G.E."/>
            <person name="Almeida N.F. Jr."/>
            <person name="Woo L."/>
            <person name="Chen Y."/>
            <person name="Paulsen I.T."/>
            <person name="Eisen J.A."/>
            <person name="Karp P.D."/>
            <person name="Bovee D. Sr."/>
            <person name="Chapman P."/>
            <person name="Clendenning J."/>
            <person name="Deatherage G."/>
            <person name="Gillet W."/>
            <person name="Grant C."/>
            <person name="Kutyavin T."/>
            <person name="Levy R."/>
            <person name="Li M.-J."/>
            <person name="McClelland E."/>
            <person name="Palmieri A."/>
            <person name="Raymond C."/>
            <person name="Rouse G."/>
            <person name="Saenphimmachak C."/>
            <person name="Wu Z."/>
            <person name="Romero P."/>
            <person name="Gordon D."/>
            <person name="Zhang S."/>
            <person name="Yoo H."/>
            <person name="Tao Y."/>
            <person name="Biddle P."/>
            <person name="Jung M."/>
            <person name="Krespan W."/>
            <person name="Perry M."/>
            <person name="Gordon-Kamm B."/>
            <person name="Liao L."/>
            <person name="Kim S."/>
            <person name="Hendrick C."/>
            <person name="Zhao Z.-Y."/>
            <person name="Dolan M."/>
            <person name="Chumley F."/>
            <person name="Tingey S.V."/>
            <person name="Tomb J.-F."/>
            <person name="Gordon M.P."/>
            <person name="Olson M.V."/>
            <person name="Nester E.W."/>
        </authorList>
    </citation>
    <scope>NUCLEOTIDE SEQUENCE [LARGE SCALE GENOMIC DNA]</scope>
    <source>
        <strain>C58 / ATCC 33970</strain>
    </source>
</reference>
<reference key="2">
    <citation type="journal article" date="2001" name="Science">
        <title>Genome sequence of the plant pathogen and biotechnology agent Agrobacterium tumefaciens C58.</title>
        <authorList>
            <person name="Goodner B."/>
            <person name="Hinkle G."/>
            <person name="Gattung S."/>
            <person name="Miller N."/>
            <person name="Blanchard M."/>
            <person name="Qurollo B."/>
            <person name="Goldman B.S."/>
            <person name="Cao Y."/>
            <person name="Askenazi M."/>
            <person name="Halling C."/>
            <person name="Mullin L."/>
            <person name="Houmiel K."/>
            <person name="Gordon J."/>
            <person name="Vaudin M."/>
            <person name="Iartchouk O."/>
            <person name="Epp A."/>
            <person name="Liu F."/>
            <person name="Wollam C."/>
            <person name="Allinger M."/>
            <person name="Doughty D."/>
            <person name="Scott C."/>
            <person name="Lappas C."/>
            <person name="Markelz B."/>
            <person name="Flanagan C."/>
            <person name="Crowell C."/>
            <person name="Gurson J."/>
            <person name="Lomo C."/>
            <person name="Sear C."/>
            <person name="Strub G."/>
            <person name="Cielo C."/>
            <person name="Slater S."/>
        </authorList>
    </citation>
    <scope>NUCLEOTIDE SEQUENCE [LARGE SCALE GENOMIC DNA]</scope>
    <source>
        <strain>C58 / ATCC 33970</strain>
    </source>
</reference>
<dbReference type="EMBL" id="AE007869">
    <property type="protein sequence ID" value="AAL42933.1"/>
    <property type="molecule type" value="Genomic_DNA"/>
</dbReference>
<dbReference type="PIR" id="AG2814">
    <property type="entry name" value="AG2814"/>
</dbReference>
<dbReference type="RefSeq" id="NP_532617.1">
    <property type="nucleotide sequence ID" value="NC_003062.2"/>
</dbReference>
<dbReference type="RefSeq" id="WP_006313974.1">
    <property type="nucleotide sequence ID" value="NC_003062.2"/>
</dbReference>
<dbReference type="SMR" id="Q8UE27"/>
<dbReference type="STRING" id="176299.Atu1937"/>
<dbReference type="EnsemblBacteria" id="AAL42933">
    <property type="protein sequence ID" value="AAL42933"/>
    <property type="gene ID" value="Atu1937"/>
</dbReference>
<dbReference type="GeneID" id="1133975"/>
<dbReference type="KEGG" id="atu:Atu1937"/>
<dbReference type="PATRIC" id="fig|176299.10.peg.1949"/>
<dbReference type="eggNOG" id="COG0186">
    <property type="taxonomic scope" value="Bacteria"/>
</dbReference>
<dbReference type="HOGENOM" id="CLU_073626_1_1_5"/>
<dbReference type="OrthoDB" id="9811714at2"/>
<dbReference type="PhylomeDB" id="Q8UE27"/>
<dbReference type="BioCyc" id="AGRO:ATU1937-MONOMER"/>
<dbReference type="Proteomes" id="UP000000813">
    <property type="component" value="Chromosome circular"/>
</dbReference>
<dbReference type="GO" id="GO:0022627">
    <property type="term" value="C:cytosolic small ribosomal subunit"/>
    <property type="evidence" value="ECO:0007669"/>
    <property type="project" value="TreeGrafter"/>
</dbReference>
<dbReference type="GO" id="GO:0019843">
    <property type="term" value="F:rRNA binding"/>
    <property type="evidence" value="ECO:0007669"/>
    <property type="project" value="UniProtKB-UniRule"/>
</dbReference>
<dbReference type="GO" id="GO:0003735">
    <property type="term" value="F:structural constituent of ribosome"/>
    <property type="evidence" value="ECO:0007669"/>
    <property type="project" value="InterPro"/>
</dbReference>
<dbReference type="GO" id="GO:0006412">
    <property type="term" value="P:translation"/>
    <property type="evidence" value="ECO:0007669"/>
    <property type="project" value="UniProtKB-UniRule"/>
</dbReference>
<dbReference type="CDD" id="cd00364">
    <property type="entry name" value="Ribosomal_uS17"/>
    <property type="match status" value="1"/>
</dbReference>
<dbReference type="Gene3D" id="2.40.50.140">
    <property type="entry name" value="Nucleic acid-binding proteins"/>
    <property type="match status" value="1"/>
</dbReference>
<dbReference type="HAMAP" id="MF_01345_B">
    <property type="entry name" value="Ribosomal_uS17_B"/>
    <property type="match status" value="1"/>
</dbReference>
<dbReference type="InterPro" id="IPR012340">
    <property type="entry name" value="NA-bd_OB-fold"/>
</dbReference>
<dbReference type="InterPro" id="IPR000266">
    <property type="entry name" value="Ribosomal_uS17"/>
</dbReference>
<dbReference type="InterPro" id="IPR019984">
    <property type="entry name" value="Ribosomal_uS17_bact/chlr"/>
</dbReference>
<dbReference type="NCBIfam" id="NF004123">
    <property type="entry name" value="PRK05610.1"/>
    <property type="match status" value="1"/>
</dbReference>
<dbReference type="NCBIfam" id="TIGR03635">
    <property type="entry name" value="uS17_bact"/>
    <property type="match status" value="1"/>
</dbReference>
<dbReference type="PANTHER" id="PTHR10744">
    <property type="entry name" value="40S RIBOSOMAL PROTEIN S11 FAMILY MEMBER"/>
    <property type="match status" value="1"/>
</dbReference>
<dbReference type="PANTHER" id="PTHR10744:SF1">
    <property type="entry name" value="SMALL RIBOSOMAL SUBUNIT PROTEIN US17M"/>
    <property type="match status" value="1"/>
</dbReference>
<dbReference type="Pfam" id="PF00366">
    <property type="entry name" value="Ribosomal_S17"/>
    <property type="match status" value="1"/>
</dbReference>
<dbReference type="PRINTS" id="PR00973">
    <property type="entry name" value="RIBOSOMALS17"/>
</dbReference>
<dbReference type="SUPFAM" id="SSF50249">
    <property type="entry name" value="Nucleic acid-binding proteins"/>
    <property type="match status" value="1"/>
</dbReference>
<keyword id="KW-1185">Reference proteome</keyword>
<keyword id="KW-0687">Ribonucleoprotein</keyword>
<keyword id="KW-0689">Ribosomal protein</keyword>
<keyword id="KW-0694">RNA-binding</keyword>
<keyword id="KW-0699">rRNA-binding</keyword>
<sequence length="78" mass="8991">MPKRILQGVVVSDKNEKTVVVRVERRFAHPLMQKTVRRSKKYKAHDENNQYKVGDVVSIEECAPISKDKRWTVVAAQA</sequence>